<gene>
    <name type="primary">CACNA1E</name>
    <name type="synonym">CACH6</name>
    <name type="synonym">CACNL1A6</name>
</gene>
<evidence type="ECO:0000250" key="1"/>
<evidence type="ECO:0000250" key="2">
    <source>
        <dbReference type="UniProtKB" id="Q07652"/>
    </source>
</evidence>
<evidence type="ECO:0000250" key="3">
    <source>
        <dbReference type="UniProtKB" id="Q61290"/>
    </source>
</evidence>
<evidence type="ECO:0000255" key="4"/>
<evidence type="ECO:0000255" key="5">
    <source>
        <dbReference type="PROSITE-ProRule" id="PRU00448"/>
    </source>
</evidence>
<evidence type="ECO:0000256" key="6">
    <source>
        <dbReference type="SAM" id="MobiDB-lite"/>
    </source>
</evidence>
<evidence type="ECO:0000269" key="7">
    <source>
    </source>
</evidence>
<evidence type="ECO:0000269" key="8">
    <source>
    </source>
</evidence>
<evidence type="ECO:0000269" key="9">
    <source>
    </source>
</evidence>
<evidence type="ECO:0000269" key="10">
    <source>
    </source>
</evidence>
<evidence type="ECO:0000303" key="11">
    <source>
    </source>
</evidence>
<evidence type="ECO:0000305" key="12"/>
<evidence type="ECO:0007829" key="13">
    <source>
        <dbReference type="PDB" id="3BXL"/>
    </source>
</evidence>
<evidence type="ECO:0007829" key="14">
    <source>
        <dbReference type="PDB" id="7XLQ"/>
    </source>
</evidence>
<evidence type="ECO:0007829" key="15">
    <source>
        <dbReference type="PDB" id="7YG5"/>
    </source>
</evidence>
<evidence type="ECO:0007829" key="16">
    <source>
        <dbReference type="PDB" id="8EPL"/>
    </source>
</evidence>
<evidence type="ECO:0007829" key="17">
    <source>
        <dbReference type="PDB" id="8EPM"/>
    </source>
</evidence>
<keyword id="KW-0002">3D-structure</keyword>
<keyword id="KW-0025">Alternative splicing</keyword>
<keyword id="KW-0106">Calcium</keyword>
<keyword id="KW-0107">Calcium channel</keyword>
<keyword id="KW-0109">Calcium transport</keyword>
<keyword id="KW-0225">Disease variant</keyword>
<keyword id="KW-1015">Disulfide bond</keyword>
<keyword id="KW-0887">Epilepsy</keyword>
<keyword id="KW-0325">Glycoprotein</keyword>
<keyword id="KW-0407">Ion channel</keyword>
<keyword id="KW-0406">Ion transport</keyword>
<keyword id="KW-0472">Membrane</keyword>
<keyword id="KW-0479">Metal-binding</keyword>
<keyword id="KW-0597">Phosphoprotein</keyword>
<keyword id="KW-1267">Proteomics identification</keyword>
<keyword id="KW-1185">Reference proteome</keyword>
<keyword id="KW-0677">Repeat</keyword>
<keyword id="KW-0812">Transmembrane</keyword>
<keyword id="KW-1133">Transmembrane helix</keyword>
<keyword id="KW-0813">Transport</keyword>
<keyword id="KW-0851">Voltage-gated channel</keyword>
<proteinExistence type="evidence at protein level"/>
<feature type="chain" id="PRO_0000053938" description="Voltage-dependent R-type calcium channel subunit alpha-1E">
    <location>
        <begin position="1"/>
        <end position="2313"/>
    </location>
</feature>
<feature type="topological domain" description="Cytoplasmic" evidence="4">
    <location>
        <begin position="1"/>
        <end position="89"/>
    </location>
</feature>
<feature type="transmembrane region" description="Helical; Name=S1 of repeat I">
    <location>
        <begin position="90"/>
        <end position="108"/>
    </location>
</feature>
<feature type="topological domain" description="Extracellular" evidence="4">
    <location>
        <begin position="109"/>
        <end position="127"/>
    </location>
</feature>
<feature type="transmembrane region" description="Helical; Name=S2 of repeat I">
    <location>
        <begin position="128"/>
        <end position="146"/>
    </location>
</feature>
<feature type="topological domain" description="Cytoplasmic" evidence="4">
    <location>
        <begin position="147"/>
        <end position="158"/>
    </location>
</feature>
<feature type="transmembrane region" description="Helical; Name=S3 of repeat I">
    <location>
        <begin position="159"/>
        <end position="173"/>
    </location>
</feature>
<feature type="topological domain" description="Extracellular" evidence="4">
    <location>
        <begin position="174"/>
        <end position="185"/>
    </location>
</feature>
<feature type="transmembrane region" description="Helical; Name=S4 of repeat I">
    <location>
        <begin position="186"/>
        <end position="205"/>
    </location>
</feature>
<feature type="topological domain" description="Cytoplasmic" evidence="4">
    <location>
        <begin position="206"/>
        <end position="223"/>
    </location>
</feature>
<feature type="transmembrane region" description="Helical; Name=S5 of repeat I">
    <location>
        <begin position="224"/>
        <end position="244"/>
    </location>
</feature>
<feature type="topological domain" description="Extracellular" evidence="4">
    <location>
        <begin position="245"/>
        <end position="326"/>
    </location>
</feature>
<feature type="transmembrane region" description="Helical; Name=S6 of repeat I">
    <location>
        <begin position="327"/>
        <end position="350"/>
    </location>
</feature>
<feature type="topological domain" description="Cytoplasmic" evidence="4">
    <location>
        <begin position="351"/>
        <end position="476"/>
    </location>
</feature>
<feature type="transmembrane region" description="Helical; Name=S1 of repeat II">
    <location>
        <begin position="477"/>
        <end position="496"/>
    </location>
</feature>
<feature type="topological domain" description="Extracellular" evidence="4">
    <location>
        <begin position="497"/>
        <end position="509"/>
    </location>
</feature>
<feature type="transmembrane region" description="Helical; Name=S2 of repeat II">
    <location>
        <begin position="510"/>
        <end position="529"/>
    </location>
</feature>
<feature type="topological domain" description="Cytoplasmic" evidence="4">
    <location>
        <begin position="530"/>
        <end position="538"/>
    </location>
</feature>
<feature type="transmembrane region" description="Helical; Name=S3 of repeat II">
    <location>
        <begin position="539"/>
        <end position="557"/>
    </location>
</feature>
<feature type="topological domain" description="Extracellular" evidence="4">
    <location>
        <begin position="558"/>
        <end position="567"/>
    </location>
</feature>
<feature type="transmembrane region" description="Helical; Name=S4 of repeat II">
    <location>
        <begin position="568"/>
        <end position="586"/>
    </location>
</feature>
<feature type="topological domain" description="Cytoplasmic" evidence="4">
    <location>
        <begin position="587"/>
        <end position="605"/>
    </location>
</feature>
<feature type="transmembrane region" description="Helical; Name=S5 of repeat II">
    <location>
        <begin position="606"/>
        <end position="625"/>
    </location>
</feature>
<feature type="topological domain" description="Extracellular" evidence="4">
    <location>
        <begin position="626"/>
        <end position="678"/>
    </location>
</feature>
<feature type="transmembrane region" description="Helical; Name=S6 of repeat II">
    <location>
        <begin position="679"/>
        <end position="703"/>
    </location>
</feature>
<feature type="topological domain" description="Cytoplasmic" evidence="4">
    <location>
        <begin position="704"/>
        <end position="1148"/>
    </location>
</feature>
<feature type="transmembrane region" description="Helical; Name=S1 of repeat III">
    <location>
        <begin position="1149"/>
        <end position="1165"/>
    </location>
</feature>
<feature type="topological domain" description="Extracellular" evidence="4">
    <location>
        <begin position="1166"/>
        <end position="1189"/>
    </location>
</feature>
<feature type="transmembrane region" description="Helical; Name=S2 of repeat III">
    <location>
        <begin position="1190"/>
        <end position="1209"/>
    </location>
</feature>
<feature type="topological domain" description="Cytoplasmic" evidence="4">
    <location>
        <begin position="1210"/>
        <end position="1217"/>
    </location>
</feature>
<feature type="transmembrane region" description="Helical; Name=S3 of repeat III">
    <location>
        <begin position="1218"/>
        <end position="1240"/>
    </location>
</feature>
<feature type="topological domain" description="Extracellular" evidence="4">
    <location>
        <begin position="1241"/>
        <end position="1254"/>
    </location>
</feature>
<feature type="transmembrane region" description="Helical; Name=S4 of repeat III">
    <location>
        <begin position="1255"/>
        <end position="1272"/>
    </location>
</feature>
<feature type="topological domain" description="Cytoplasmic" evidence="4">
    <location>
        <begin position="1273"/>
        <end position="1291"/>
    </location>
</feature>
<feature type="transmembrane region" description="Helical; Name=S5 of repeat III">
    <location>
        <begin position="1292"/>
        <end position="1311"/>
    </location>
</feature>
<feature type="topological domain" description="Extracellular" evidence="4">
    <location>
        <begin position="1312"/>
        <end position="1398"/>
    </location>
</feature>
<feature type="transmembrane region" description="Helical; Name=S6 of repeat III">
    <location>
        <begin position="1399"/>
        <end position="1422"/>
    </location>
</feature>
<feature type="topological domain" description="Cytoplasmic" evidence="4">
    <location>
        <begin position="1423"/>
        <end position="1479"/>
    </location>
</feature>
<feature type="transmembrane region" description="Helical; Name=S1 of repeat IV">
    <location>
        <begin position="1480"/>
        <end position="1498"/>
    </location>
</feature>
<feature type="topological domain" description="Extracellular" evidence="4">
    <location>
        <begin position="1499"/>
        <end position="1513"/>
    </location>
</feature>
<feature type="transmembrane region" description="Helical; Name=S2 of repeat IV">
    <location>
        <begin position="1514"/>
        <end position="1533"/>
    </location>
</feature>
<feature type="topological domain" description="Cytoplasmic" evidence="4">
    <location>
        <begin position="1534"/>
        <end position="1541"/>
    </location>
</feature>
<feature type="transmembrane region" description="Helical; Name=S3 of repeat IV">
    <location>
        <begin position="1542"/>
        <end position="1560"/>
    </location>
</feature>
<feature type="topological domain" description="Extracellular" evidence="4">
    <location>
        <begin position="1561"/>
        <end position="1571"/>
    </location>
</feature>
<feature type="transmembrane region" description="Helical; Name=S4 of repeat IV">
    <location>
        <begin position="1572"/>
        <end position="1590"/>
    </location>
</feature>
<feature type="topological domain" description="Cytoplasmic" evidence="4">
    <location>
        <begin position="1591"/>
        <end position="1609"/>
    </location>
</feature>
<feature type="transmembrane region" description="Helical; Name=S5 of repeat IV">
    <location>
        <begin position="1610"/>
        <end position="1629"/>
    </location>
</feature>
<feature type="topological domain" description="Extracellular" evidence="4">
    <location>
        <begin position="1630"/>
        <end position="1698"/>
    </location>
</feature>
<feature type="transmembrane region" description="Helical; Name=S6 of repeat IV">
    <location>
        <begin position="1699"/>
        <end position="1724"/>
    </location>
</feature>
<feature type="topological domain" description="Cytoplasmic" evidence="4">
    <location>
        <begin position="1725"/>
        <end position="2313"/>
    </location>
</feature>
<feature type="repeat" description="I">
    <location>
        <begin position="76"/>
        <end position="354"/>
    </location>
</feature>
<feature type="repeat" description="II">
    <location>
        <begin position="462"/>
        <end position="706"/>
    </location>
</feature>
<feature type="repeat" description="III">
    <location>
        <begin position="1140"/>
        <end position="1426"/>
    </location>
</feature>
<feature type="repeat" description="IV">
    <location>
        <begin position="1463"/>
        <end position="1726"/>
    </location>
</feature>
<feature type="domain" description="EF-hand" evidence="5">
    <location>
        <begin position="1739"/>
        <end position="1774"/>
    </location>
</feature>
<feature type="region of interest" description="Disordered" evidence="6">
    <location>
        <begin position="1"/>
        <end position="38"/>
    </location>
</feature>
<feature type="region of interest" description="Binding to the beta subunit" evidence="1">
    <location>
        <begin position="374"/>
        <end position="391"/>
    </location>
</feature>
<feature type="region of interest" description="Disordered" evidence="6">
    <location>
        <begin position="729"/>
        <end position="774"/>
    </location>
</feature>
<feature type="region of interest" description="Disordered" evidence="6">
    <location>
        <begin position="851"/>
        <end position="984"/>
    </location>
</feature>
<feature type="region of interest" description="Disordered" evidence="6">
    <location>
        <begin position="1103"/>
        <end position="1125"/>
    </location>
</feature>
<feature type="region of interest" description="Disordered" evidence="6">
    <location>
        <begin position="1970"/>
        <end position="2170"/>
    </location>
</feature>
<feature type="region of interest" description="Disordered" evidence="6">
    <location>
        <begin position="2206"/>
        <end position="2225"/>
    </location>
</feature>
<feature type="region of interest" description="Disordered" evidence="6">
    <location>
        <begin position="2263"/>
        <end position="2295"/>
    </location>
</feature>
<feature type="compositionally biased region" description="Polar residues" evidence="6">
    <location>
        <begin position="866"/>
        <end position="875"/>
    </location>
</feature>
<feature type="compositionally biased region" description="Basic residues" evidence="6">
    <location>
        <begin position="913"/>
        <end position="926"/>
    </location>
</feature>
<feature type="compositionally biased region" description="Low complexity" evidence="6">
    <location>
        <begin position="933"/>
        <end position="945"/>
    </location>
</feature>
<feature type="compositionally biased region" description="Basic and acidic residues" evidence="6">
    <location>
        <begin position="955"/>
        <end position="983"/>
    </location>
</feature>
<feature type="compositionally biased region" description="Polar residues" evidence="6">
    <location>
        <begin position="2012"/>
        <end position="2023"/>
    </location>
</feature>
<feature type="compositionally biased region" description="Low complexity" evidence="6">
    <location>
        <begin position="2055"/>
        <end position="2064"/>
    </location>
</feature>
<feature type="compositionally biased region" description="Basic and acidic residues" evidence="6">
    <location>
        <begin position="2065"/>
        <end position="2085"/>
    </location>
</feature>
<feature type="compositionally biased region" description="Basic and acidic residues" evidence="6">
    <location>
        <begin position="2101"/>
        <end position="2118"/>
    </location>
</feature>
<feature type="compositionally biased region" description="Polar residues" evidence="6">
    <location>
        <begin position="2129"/>
        <end position="2152"/>
    </location>
</feature>
<feature type="compositionally biased region" description="Low complexity" evidence="6">
    <location>
        <begin position="2210"/>
        <end position="2225"/>
    </location>
</feature>
<feature type="binding site" evidence="12">
    <location>
        <position position="426"/>
    </location>
    <ligand>
        <name>Ca(2+)</name>
        <dbReference type="ChEBI" id="CHEBI:29108"/>
        <label>1</label>
    </ligand>
</feature>
<feature type="binding site" evidence="12">
    <location>
        <position position="428"/>
    </location>
    <ligand>
        <name>Ca(2+)</name>
        <dbReference type="ChEBI" id="CHEBI:29108"/>
        <label>1</label>
    </ligand>
</feature>
<feature type="binding site" evidence="12">
    <location>
        <position position="430"/>
    </location>
    <ligand>
        <name>Ca(2+)</name>
        <dbReference type="ChEBI" id="CHEBI:29108"/>
        <label>1</label>
    </ligand>
</feature>
<feature type="binding site" evidence="12">
    <location>
        <position position="432"/>
    </location>
    <ligand>
        <name>Ca(2+)</name>
        <dbReference type="ChEBI" id="CHEBI:29108"/>
        <label>1</label>
    </ligand>
</feature>
<feature type="binding site" evidence="12">
    <location>
        <position position="1752"/>
    </location>
    <ligand>
        <name>Ca(2+)</name>
        <dbReference type="ChEBI" id="CHEBI:29108"/>
        <label>2</label>
    </ligand>
</feature>
<feature type="binding site" evidence="12">
    <location>
        <position position="1758"/>
    </location>
    <ligand>
        <name>Ca(2+)</name>
        <dbReference type="ChEBI" id="CHEBI:29108"/>
        <label>2</label>
    </ligand>
</feature>
<feature type="binding site" evidence="12">
    <location>
        <position position="1763"/>
    </location>
    <ligand>
        <name>Ca(2+)</name>
        <dbReference type="ChEBI" id="CHEBI:29108"/>
        <label>2</label>
    </ligand>
</feature>
<feature type="site" description="Calcium ion selectivity and permeability" evidence="1">
    <location>
        <position position="309"/>
    </location>
</feature>
<feature type="site" description="Calcium ion selectivity and permeability" evidence="1">
    <location>
        <position position="657"/>
    </location>
</feature>
<feature type="site" description="Calcium ion selectivity and permeability" evidence="1">
    <location>
        <position position="1372"/>
    </location>
</feature>
<feature type="site" description="Calcium ion selectivity and permeability" evidence="1">
    <location>
        <position position="1663"/>
    </location>
</feature>
<feature type="modified residue" description="Phosphoserine" evidence="3">
    <location>
        <position position="14"/>
    </location>
</feature>
<feature type="modified residue" description="Phosphoserine" evidence="3">
    <location>
        <position position="19"/>
    </location>
</feature>
<feature type="modified residue" description="Phosphoserine" evidence="3">
    <location>
        <position position="427"/>
    </location>
</feature>
<feature type="modified residue" description="Phosphothreonine" evidence="3">
    <location>
        <position position="440"/>
    </location>
</feature>
<feature type="modified residue" description="Phosphoserine" evidence="2">
    <location>
        <position position="736"/>
    </location>
</feature>
<feature type="modified residue" description="Phosphoserine" evidence="3">
    <location>
        <position position="745"/>
    </location>
</feature>
<feature type="modified residue" description="Phosphoserine" evidence="2">
    <location>
        <position position="793"/>
    </location>
</feature>
<feature type="modified residue" description="Phosphoserine" evidence="3">
    <location>
        <position position="815"/>
    </location>
</feature>
<feature type="modified residue" description="Phosphoserine" evidence="3">
    <location>
        <position position="855"/>
    </location>
</feature>
<feature type="modified residue" description="Phosphoserine" evidence="2">
    <location>
        <position position="947"/>
    </location>
</feature>
<feature type="modified residue" description="Phosphoserine" evidence="2">
    <location>
        <position position="1097"/>
    </location>
</feature>
<feature type="modified residue" description="Phosphoserine" evidence="3">
    <location>
        <position position="2094"/>
    </location>
</feature>
<feature type="modified residue" description="Phosphoserine" evidence="2">
    <location>
        <position position="2113"/>
    </location>
</feature>
<feature type="glycosylation site" description="N-linked (GlcNAc...) asparagine" evidence="4">
    <location>
        <position position="254"/>
    </location>
</feature>
<feature type="glycosylation site" description="N-linked (GlcNAc...) asparagine" evidence="4">
    <location>
        <position position="1566"/>
    </location>
</feature>
<feature type="glycosylation site" description="N-linked (GlcNAc...) asparagine" evidence="4">
    <location>
        <position position="1571"/>
    </location>
</feature>
<feature type="splice variant" id="VSP_000937" description="In isoform 2." evidence="11">
    <location>
        <begin position="748"/>
        <end position="766"/>
    </location>
</feature>
<feature type="splice variant" id="VSP_024817" description="In isoform 2 and isoform 3." evidence="11">
    <location>
        <begin position="1967"/>
        <end position="2009"/>
    </location>
</feature>
<feature type="sequence variant" id="VAR_081838" description="In DEE69; dbSNP:rs1553286282." evidence="8">
    <original>L</original>
    <variation>P</variation>
    <location>
        <position position="228"/>
    </location>
</feature>
<feature type="sequence variant" id="VAR_081839" description="In DEE69; dbSNP:rs2102063243." evidence="8">
    <original>G</original>
    <variation>R</variation>
    <location>
        <position position="348"/>
    </location>
</feature>
<feature type="sequence variant" id="VAR_081840" description="In DEE69; dbSNP:rs886039323." evidence="8">
    <original>G</original>
    <variation>R</variation>
    <location>
        <position position="352"/>
    </location>
</feature>
<feature type="sequence variant" id="VAR_081841" description="In DEE69; gain-of-function variant affecting channel activity; results in hyperpolarizing shift in half activation voltage; dbSNP:rs778291283." evidence="8">
    <original>I</original>
    <variation>L</variation>
    <location>
        <position position="603"/>
    </location>
</feature>
<feature type="sequence variant" id="VAR_081842" description="In DEE69; dbSNP:rs1361083258." evidence="8">
    <original>G</original>
    <variation>D</variation>
    <location>
        <position position="690"/>
    </location>
</feature>
<feature type="sequence variant" id="VAR_081843" description="In DEE69; gain-of-function variant affecting channel activity; shifts the voltage dependence of activation toward more negative potentials and slows the fast inactivation time course; dbSNP:rs869312920." evidence="8">
    <original>F</original>
    <variation>S</variation>
    <location>
        <position position="698"/>
    </location>
</feature>
<feature type="sequence variant" id="VAR_081844" description="In DEE69; dbSNP:rs2102499747." evidence="8">
    <original>A</original>
    <variation>T</variation>
    <location>
        <position position="700"/>
    </location>
</feature>
<feature type="sequence variant" id="VAR_081845" description="In DEE69; gain-of-function variant affecting channel activity; shifts the voltage dependence of activation toward more negative potentials and slows the fast inactivation time course; dbSNP:rs1558308998." evidence="8">
    <original>I</original>
    <variation>V</variation>
    <location>
        <position position="701"/>
    </location>
</feature>
<feature type="sequence variant" id="VAR_081846" description="In DEE69; dbSNP:rs12131800." evidence="8">
    <original>A</original>
    <variation>P</variation>
    <location>
        <position position="702"/>
    </location>
</feature>
<feature type="sequence variant" id="VAR_081847" description="In DEE69; gain-of-function variant affecting channel activity; shifts the voltage dependence of activation toward more negative potentials and slows the fast inactivation time course; dbSNP:rs12131800." evidence="8">
    <original>A</original>
    <variation>T</variation>
    <location>
        <position position="702"/>
    </location>
</feature>
<feature type="sequence variant" id="VAR_081848" description="In DEE69; uncertain significance." evidence="8">
    <location>
        <begin position="829"/>
        <end position="2313"/>
    </location>
</feature>
<feature type="sequence variant" id="VAR_031912" description="In dbSNP:rs35737760.">
    <original>D</original>
    <variation>E</variation>
    <location>
        <position position="859"/>
    </location>
</feature>
<feature type="sequence variant" id="VAR_081849" description="In DEE69; uncertain significance." evidence="8">
    <location>
        <begin position="1389"/>
        <end position="2313"/>
    </location>
</feature>
<feature type="sequence variant" id="VAR_081850" description="In DEE69; dbSNP:rs2102689621." evidence="8">
    <original>I</original>
    <variation>F</variation>
    <location>
        <position position="1422"/>
    </location>
</feature>
<feature type="sequence variant" id="VAR_081851" description="In DEE69; dbSNP:rs2102689660." evidence="8">
    <original>T</original>
    <variation>N</variation>
    <location>
        <position position="1425"/>
    </location>
</feature>
<feature type="sequence variant" id="VAR_081852" description="In DEE69; dbSNP:rs1553345844." evidence="8">
    <original>G</original>
    <variation>R</variation>
    <location>
        <position position="1430"/>
    </location>
</feature>
<feature type="sequence variant" id="VAR_081853" description="In DEE69; dbSNP:rs2102795834." evidence="8">
    <original>A</original>
    <variation>G</variation>
    <location>
        <position position="1720"/>
    </location>
</feature>
<feature type="sequence variant" id="VAR_046996" description="In dbSNP:rs704326." evidence="9">
    <original>A</original>
    <variation>T</variation>
    <location>
        <position position="1955"/>
    </location>
</feature>
<feature type="sequence conflict" description="In Ref. 1; AAA72125." evidence="12" ref="1">
    <original>M</original>
    <variation>I</variation>
    <location>
        <position position="648"/>
    </location>
</feature>
<feature type="sequence conflict" description="In Ref. 1; AAA72125." evidence="12" ref="1">
    <original>LAL</original>
    <variation>WP</variation>
    <location>
        <begin position="836"/>
        <end position="838"/>
    </location>
</feature>
<feature type="sequence conflict" description="In Ref. 2; AAA59204/AAA59205." evidence="12" ref="2">
    <original>R</original>
    <variation>P</variation>
    <location>
        <position position="2077"/>
    </location>
</feature>
<feature type="sequence conflict" description="In Ref. 2; AAA59204/AAA59205." evidence="12" ref="2">
    <original>G</original>
    <variation>R</variation>
    <location>
        <position position="2084"/>
    </location>
</feature>
<feature type="sequence conflict" description="In Ref. 2; AAA59204/AAA59205." evidence="12" ref="2">
    <original>C</original>
    <variation>W</variation>
    <location>
        <position position="2206"/>
    </location>
</feature>
<feature type="sequence conflict" description="In Ref. 2; AAA59204/AAA59205." evidence="12" ref="2">
    <original>S</original>
    <variation>R</variation>
    <location>
        <position position="2219"/>
    </location>
</feature>
<feature type="sequence conflict" description="In Ref. 2; AAA59204/AAA59205." evidence="12" ref="2">
    <original>G</original>
    <variation>V</variation>
    <location>
        <position position="2245"/>
    </location>
</feature>
<feature type="turn" evidence="15">
    <location>
        <begin position="84"/>
        <end position="86"/>
    </location>
</feature>
<feature type="strand" evidence="15">
    <location>
        <begin position="87"/>
        <end position="90"/>
    </location>
</feature>
<feature type="turn" evidence="15">
    <location>
        <begin position="91"/>
        <end position="94"/>
    </location>
</feature>
<feature type="helix" evidence="15">
    <location>
        <begin position="95"/>
        <end position="108"/>
    </location>
</feature>
<feature type="strand" evidence="15">
    <location>
        <begin position="113"/>
        <end position="115"/>
    </location>
</feature>
<feature type="helix" evidence="15">
    <location>
        <begin position="119"/>
        <end position="124"/>
    </location>
</feature>
<feature type="turn" evidence="15">
    <location>
        <begin position="125"/>
        <end position="127"/>
    </location>
</feature>
<feature type="helix" evidence="15">
    <location>
        <begin position="128"/>
        <end position="144"/>
    </location>
</feature>
<feature type="strand" evidence="15">
    <location>
        <begin position="148"/>
        <end position="151"/>
    </location>
</feature>
<feature type="turn" evidence="15">
    <location>
        <begin position="155"/>
        <end position="157"/>
    </location>
</feature>
<feature type="helix" evidence="15">
    <location>
        <begin position="159"/>
        <end position="174"/>
    </location>
</feature>
<feature type="helix" evidence="15">
    <location>
        <begin position="178"/>
        <end position="180"/>
    </location>
</feature>
<feature type="turn" evidence="15">
    <location>
        <begin position="181"/>
        <end position="184"/>
    </location>
</feature>
<feature type="helix" evidence="15">
    <location>
        <begin position="190"/>
        <end position="198"/>
    </location>
</feature>
<feature type="helix" evidence="15">
    <location>
        <begin position="199"/>
        <end position="203"/>
    </location>
</feature>
<feature type="helix" evidence="15">
    <location>
        <begin position="205"/>
        <end position="217"/>
    </location>
</feature>
<feature type="helix" evidence="15">
    <location>
        <begin position="218"/>
        <end position="221"/>
    </location>
</feature>
<feature type="helix" evidence="15">
    <location>
        <begin position="224"/>
        <end position="242"/>
    </location>
</feature>
<feature type="strand" evidence="15">
    <location>
        <begin position="243"/>
        <end position="245"/>
    </location>
</feature>
<feature type="strand" evidence="15">
    <location>
        <begin position="249"/>
        <end position="253"/>
    </location>
</feature>
<feature type="strand" evidence="15">
    <location>
        <begin position="256"/>
        <end position="258"/>
    </location>
</feature>
<feature type="strand" evidence="15">
    <location>
        <begin position="269"/>
        <end position="271"/>
    </location>
</feature>
<feature type="strand" evidence="15">
    <location>
        <begin position="274"/>
        <end position="281"/>
    </location>
</feature>
<feature type="turn" evidence="17">
    <location>
        <begin position="285"/>
        <end position="288"/>
    </location>
</feature>
<feature type="strand" evidence="15">
    <location>
        <begin position="293"/>
        <end position="295"/>
    </location>
</feature>
<feature type="helix" evidence="15">
    <location>
        <begin position="298"/>
        <end position="306"/>
    </location>
</feature>
<feature type="helix" evidence="15">
    <location>
        <begin position="311"/>
        <end position="322"/>
    </location>
</feature>
<feature type="turn" evidence="15">
    <location>
        <begin position="324"/>
        <end position="327"/>
    </location>
</feature>
<feature type="helix" evidence="15">
    <location>
        <begin position="328"/>
        <end position="339"/>
    </location>
</feature>
<feature type="helix" evidence="15">
    <location>
        <begin position="341"/>
        <end position="357"/>
    </location>
</feature>
<feature type="helix" evidence="15">
    <location>
        <begin position="361"/>
        <end position="384"/>
    </location>
</feature>
<feature type="helix" evidence="15">
    <location>
        <begin position="461"/>
        <end position="464"/>
    </location>
</feature>
<feature type="turn" evidence="15">
    <location>
        <begin position="465"/>
        <end position="467"/>
    </location>
</feature>
<feature type="helix" evidence="15">
    <location>
        <begin position="468"/>
        <end position="472"/>
    </location>
</feature>
<feature type="helix" evidence="15">
    <location>
        <begin position="476"/>
        <end position="492"/>
    </location>
</feature>
<feature type="helix" evidence="15">
    <location>
        <begin position="502"/>
        <end position="527"/>
    </location>
</feature>
<feature type="turn" evidence="15">
    <location>
        <begin position="528"/>
        <end position="530"/>
    </location>
</feature>
<feature type="turn" evidence="15">
    <location>
        <begin position="533"/>
        <end position="537"/>
    </location>
</feature>
<feature type="helix" evidence="15">
    <location>
        <begin position="539"/>
        <end position="559"/>
    </location>
</feature>
<feature type="helix" evidence="15">
    <location>
        <begin position="570"/>
        <end position="582"/>
    </location>
</feature>
<feature type="helix" evidence="15">
    <location>
        <begin position="586"/>
        <end position="598"/>
    </location>
</feature>
<feature type="helix" evidence="15">
    <location>
        <begin position="601"/>
        <end position="625"/>
    </location>
</feature>
<feature type="turn" evidence="15">
    <location>
        <begin position="626"/>
        <end position="629"/>
    </location>
</feature>
<feature type="strand" evidence="14">
    <location>
        <begin position="640"/>
        <end position="642"/>
    </location>
</feature>
<feature type="helix" evidence="15">
    <location>
        <begin position="643"/>
        <end position="654"/>
    </location>
</feature>
<feature type="turn" evidence="14">
    <location>
        <begin position="655"/>
        <end position="658"/>
    </location>
</feature>
<feature type="helix" evidence="15">
    <location>
        <begin position="659"/>
        <end position="669"/>
    </location>
</feature>
<feature type="turn" evidence="15">
    <location>
        <begin position="673"/>
        <end position="676"/>
    </location>
</feature>
<feature type="helix" evidence="15">
    <location>
        <begin position="677"/>
        <end position="681"/>
    </location>
</feature>
<feature type="turn" evidence="15">
    <location>
        <begin position="682"/>
        <end position="687"/>
    </location>
</feature>
<feature type="turn" evidence="15">
    <location>
        <begin position="689"/>
        <end position="696"/>
    </location>
</feature>
<feature type="helix" evidence="15">
    <location>
        <begin position="697"/>
        <end position="712"/>
    </location>
</feature>
<feature type="turn" evidence="15">
    <location>
        <begin position="713"/>
        <end position="723"/>
    </location>
</feature>
<feature type="helix" evidence="15">
    <location>
        <begin position="724"/>
        <end position="727"/>
    </location>
</feature>
<feature type="helix" evidence="15">
    <location>
        <begin position="777"/>
        <end position="787"/>
    </location>
</feature>
<feature type="helix" evidence="15">
    <location>
        <begin position="1147"/>
        <end position="1150"/>
    </location>
</feature>
<feature type="strand" evidence="15">
    <location>
        <begin position="1152"/>
        <end position="1155"/>
    </location>
</feature>
<feature type="helix" evidence="15">
    <location>
        <begin position="1158"/>
        <end position="1171"/>
    </location>
</feature>
<feature type="strand" evidence="16">
    <location>
        <begin position="1178"/>
        <end position="1180"/>
    </location>
</feature>
<feature type="helix" evidence="15">
    <location>
        <begin position="1181"/>
        <end position="1208"/>
    </location>
</feature>
<feature type="helix" evidence="15">
    <location>
        <begin position="1223"/>
        <end position="1241"/>
    </location>
</feature>
<feature type="strand" evidence="15">
    <location>
        <begin position="1244"/>
        <end position="1247"/>
    </location>
</feature>
<feature type="helix" evidence="15">
    <location>
        <begin position="1251"/>
        <end position="1257"/>
    </location>
</feature>
<feature type="helix" evidence="15">
    <location>
        <begin position="1259"/>
        <end position="1263"/>
    </location>
</feature>
<feature type="helix" evidence="15">
    <location>
        <begin position="1265"/>
        <end position="1267"/>
    </location>
</feature>
<feature type="helix" evidence="15">
    <location>
        <begin position="1268"/>
        <end position="1271"/>
    </location>
</feature>
<feature type="helix" evidence="15">
    <location>
        <begin position="1273"/>
        <end position="1288"/>
    </location>
</feature>
<feature type="turn" evidence="15">
    <location>
        <begin position="1289"/>
        <end position="1292"/>
    </location>
</feature>
<feature type="helix" evidence="15">
    <location>
        <begin position="1293"/>
        <end position="1311"/>
    </location>
</feature>
<feature type="turn" evidence="14">
    <location>
        <begin position="1312"/>
        <end position="1314"/>
    </location>
</feature>
<feature type="strand" evidence="15">
    <location>
        <begin position="1316"/>
        <end position="1320"/>
    </location>
</feature>
<feature type="turn" evidence="15">
    <location>
        <begin position="1326"/>
        <end position="1328"/>
    </location>
</feature>
<feature type="strand" evidence="15">
    <location>
        <begin position="1331"/>
        <end position="1335"/>
    </location>
</feature>
<feature type="helix" evidence="16">
    <location>
        <begin position="1337"/>
        <end position="1339"/>
    </location>
</feature>
<feature type="strand" evidence="15">
    <location>
        <begin position="1342"/>
        <end position="1345"/>
    </location>
</feature>
<feature type="strand" evidence="15">
    <location>
        <begin position="1348"/>
        <end position="1350"/>
    </location>
</feature>
<feature type="helix" evidence="15">
    <location>
        <begin position="1358"/>
        <end position="1369"/>
    </location>
</feature>
<feature type="helix" evidence="15">
    <location>
        <begin position="1374"/>
        <end position="1382"/>
    </location>
</feature>
<feature type="turn" evidence="14">
    <location>
        <begin position="1393"/>
        <end position="1396"/>
    </location>
</feature>
<feature type="helix" evidence="15">
    <location>
        <begin position="1397"/>
        <end position="1400"/>
    </location>
</feature>
<feature type="helix" evidence="15">
    <location>
        <begin position="1402"/>
        <end position="1409"/>
    </location>
</feature>
<feature type="turn" evidence="15">
    <location>
        <begin position="1410"/>
        <end position="1412"/>
    </location>
</feature>
<feature type="helix" evidence="15">
    <location>
        <begin position="1413"/>
        <end position="1424"/>
    </location>
</feature>
<feature type="helix" evidence="15">
    <location>
        <begin position="1434"/>
        <end position="1437"/>
    </location>
</feature>
<feature type="helix" evidence="15">
    <location>
        <begin position="1442"/>
        <end position="1446"/>
    </location>
</feature>
<feature type="helix" evidence="15">
    <location>
        <begin position="1467"/>
        <end position="1469"/>
    </location>
</feature>
<feature type="helix" evidence="15">
    <location>
        <begin position="1471"/>
        <end position="1475"/>
    </location>
</feature>
<feature type="strand" evidence="15">
    <location>
        <begin position="1476"/>
        <end position="1480"/>
    </location>
</feature>
<feature type="helix" evidence="15">
    <location>
        <begin position="1481"/>
        <end position="1494"/>
    </location>
</feature>
<feature type="helix" evidence="15">
    <location>
        <begin position="1505"/>
        <end position="1525"/>
    </location>
</feature>
<feature type="turn" evidence="14">
    <location>
        <begin position="1526"/>
        <end position="1528"/>
    </location>
</feature>
<feature type="helix" evidence="15">
    <location>
        <begin position="1529"/>
        <end position="1532"/>
    </location>
</feature>
<feature type="helix" evidence="15">
    <location>
        <begin position="1534"/>
        <end position="1537"/>
    </location>
</feature>
<feature type="strand" evidence="15">
    <location>
        <begin position="1540"/>
        <end position="1542"/>
    </location>
</feature>
<feature type="helix" evidence="15">
    <location>
        <begin position="1543"/>
        <end position="1560"/>
    </location>
</feature>
<feature type="strand" evidence="15">
    <location>
        <begin position="1561"/>
        <end position="1564"/>
    </location>
</feature>
<feature type="strand" evidence="16">
    <location>
        <begin position="1568"/>
        <end position="1570"/>
    </location>
</feature>
<feature type="helix" evidence="15">
    <location>
        <begin position="1575"/>
        <end position="1580"/>
    </location>
</feature>
<feature type="helix" evidence="15">
    <location>
        <begin position="1581"/>
        <end position="1584"/>
    </location>
</feature>
<feature type="helix" evidence="15">
    <location>
        <begin position="1585"/>
        <end position="1588"/>
    </location>
</feature>
<feature type="helix" evidence="15">
    <location>
        <begin position="1593"/>
        <end position="1605"/>
    </location>
</feature>
<feature type="helix" evidence="15">
    <location>
        <begin position="1610"/>
        <end position="1629"/>
    </location>
</feature>
<feature type="strand" evidence="15">
    <location>
        <begin position="1638"/>
        <end position="1640"/>
    </location>
</feature>
<feature type="strand" evidence="15">
    <location>
        <begin position="1642"/>
        <end position="1644"/>
    </location>
</feature>
<feature type="strand" evidence="15">
    <location>
        <begin position="1646"/>
        <end position="1648"/>
    </location>
</feature>
<feature type="helix" evidence="15">
    <location>
        <begin position="1649"/>
        <end position="1660"/>
    </location>
</feature>
<feature type="helix" evidence="15">
    <location>
        <begin position="1665"/>
        <end position="1671"/>
    </location>
</feature>
<feature type="strand" evidence="14">
    <location>
        <begin position="1673"/>
        <end position="1675"/>
    </location>
</feature>
<feature type="strand" evidence="16">
    <location>
        <begin position="1682"/>
        <end position="1684"/>
    </location>
</feature>
<feature type="strand" evidence="15">
    <location>
        <begin position="1688"/>
        <end position="1690"/>
    </location>
</feature>
<feature type="helix" evidence="15">
    <location>
        <begin position="1699"/>
        <end position="1722"/>
    </location>
</feature>
<feature type="helix" evidence="15">
    <location>
        <begin position="1723"/>
        <end position="1725"/>
    </location>
</feature>
<feature type="helix" evidence="15">
    <location>
        <begin position="1726"/>
        <end position="1729"/>
    </location>
</feature>
<feature type="strand" evidence="15">
    <location>
        <begin position="1733"/>
        <end position="1735"/>
    </location>
</feature>
<feature type="helix" evidence="15">
    <location>
        <begin position="1738"/>
        <end position="1741"/>
    </location>
</feature>
<feature type="helix" evidence="15">
    <location>
        <begin position="1743"/>
        <end position="1751"/>
    </location>
</feature>
<feature type="strand" evidence="15">
    <location>
        <begin position="1755"/>
        <end position="1757"/>
    </location>
</feature>
<feature type="helix" evidence="15">
    <location>
        <begin position="1762"/>
        <end position="1767"/>
    </location>
</feature>
<feature type="turn" evidence="15">
    <location>
        <begin position="1768"/>
        <end position="1770"/>
    </location>
</feature>
<feature type="turn" evidence="14">
    <location>
        <begin position="1773"/>
        <end position="1775"/>
    </location>
</feature>
<feature type="helix" evidence="15">
    <location>
        <begin position="1784"/>
        <end position="1790"/>
    </location>
</feature>
<feature type="strand" evidence="16">
    <location>
        <begin position="1791"/>
        <end position="1794"/>
    </location>
</feature>
<feature type="helix" evidence="16">
    <location>
        <begin position="1796"/>
        <end position="1798"/>
    </location>
</feature>
<feature type="helix" evidence="15">
    <location>
        <begin position="1805"/>
        <end position="1817"/>
    </location>
</feature>
<feature type="turn" evidence="16">
    <location>
        <begin position="1822"/>
        <end position="1824"/>
    </location>
</feature>
<feature type="helix" evidence="15">
    <location>
        <begin position="1825"/>
        <end position="1842"/>
    </location>
</feature>
<feature type="helix" evidence="15">
    <location>
        <begin position="1848"/>
        <end position="1854"/>
    </location>
</feature>
<feature type="strand" evidence="15">
    <location>
        <begin position="1860"/>
        <end position="1862"/>
    </location>
</feature>
<feature type="helix" evidence="13">
    <location>
        <begin position="1868"/>
        <end position="1882"/>
    </location>
</feature>
<dbReference type="EMBL" id="L27745">
    <property type="protein sequence ID" value="AAA72125.1"/>
    <property type="molecule type" value="mRNA"/>
</dbReference>
<dbReference type="EMBL" id="L29384">
    <property type="protein sequence ID" value="AAA59204.1"/>
    <property type="molecule type" value="mRNA"/>
</dbReference>
<dbReference type="EMBL" id="L29385">
    <property type="protein sequence ID" value="AAA59205.1"/>
    <property type="molecule type" value="mRNA"/>
</dbReference>
<dbReference type="EMBL" id="AL161734">
    <property type="status" value="NOT_ANNOTATED_CDS"/>
    <property type="molecule type" value="Genomic_DNA"/>
</dbReference>
<dbReference type="EMBL" id="AL359270">
    <property type="status" value="NOT_ANNOTATED_CDS"/>
    <property type="molecule type" value="Genomic_DNA"/>
</dbReference>
<dbReference type="EMBL" id="AL160059">
    <property type="status" value="NOT_ANNOTATED_CDS"/>
    <property type="molecule type" value="Genomic_DNA"/>
</dbReference>
<dbReference type="EMBL" id="AL590998">
    <property type="status" value="NOT_ANNOTATED_CDS"/>
    <property type="molecule type" value="Genomic_DNA"/>
</dbReference>
<dbReference type="CCDS" id="CCDS53443.1">
    <molecule id="Q15878-3"/>
</dbReference>
<dbReference type="CCDS" id="CCDS55664.1">
    <molecule id="Q15878-1"/>
</dbReference>
<dbReference type="CCDS" id="CCDS55665.1">
    <molecule id="Q15878-2"/>
</dbReference>
<dbReference type="PIR" id="A54972">
    <property type="entry name" value="A54972"/>
</dbReference>
<dbReference type="PIR" id="B54972">
    <property type="entry name" value="B54972"/>
</dbReference>
<dbReference type="RefSeq" id="NP_000712.2">
    <molecule id="Q15878-3"/>
    <property type="nucleotide sequence ID" value="NM_000721.4"/>
</dbReference>
<dbReference type="RefSeq" id="NP_001192222.1">
    <molecule id="Q15878-1"/>
    <property type="nucleotide sequence ID" value="NM_001205293.3"/>
</dbReference>
<dbReference type="RefSeq" id="NP_001192223.1">
    <molecule id="Q15878-2"/>
    <property type="nucleotide sequence ID" value="NM_001205294.2"/>
</dbReference>
<dbReference type="PDB" id="3BXL">
    <property type="method" value="X-ray"/>
    <property type="resolution" value="2.30 A"/>
    <property type="chains" value="B=1867-1887"/>
</dbReference>
<dbReference type="PDB" id="7XLQ">
    <property type="method" value="EM"/>
    <property type="resolution" value="3.10 A"/>
    <property type="chains" value="A=1-2313"/>
</dbReference>
<dbReference type="PDB" id="7YG5">
    <property type="method" value="EM"/>
    <property type="resolution" value="3.00 A"/>
    <property type="chains" value="A=1-2313"/>
</dbReference>
<dbReference type="PDB" id="8EPL">
    <property type="method" value="EM"/>
    <property type="resolution" value="3.10 A"/>
    <property type="chains" value="A=1-2313"/>
</dbReference>
<dbReference type="PDB" id="8EPM">
    <property type="method" value="EM"/>
    <property type="resolution" value="3.10 A"/>
    <property type="chains" value="A=1-2313"/>
</dbReference>
<dbReference type="PDBsum" id="3BXL"/>
<dbReference type="PDBsum" id="7XLQ"/>
<dbReference type="PDBsum" id="7YG5"/>
<dbReference type="PDBsum" id="8EPL"/>
<dbReference type="PDBsum" id="8EPM"/>
<dbReference type="EMDB" id="EMD-28529"/>
<dbReference type="EMDB" id="EMD-28530"/>
<dbReference type="EMDB" id="EMD-33285"/>
<dbReference type="EMDB" id="EMD-33808"/>
<dbReference type="SMR" id="Q15878"/>
<dbReference type="BioGRID" id="107231">
    <property type="interactions" value="8"/>
</dbReference>
<dbReference type="FunCoup" id="Q15878">
    <property type="interactions" value="667"/>
</dbReference>
<dbReference type="IntAct" id="Q15878">
    <property type="interactions" value="2"/>
</dbReference>
<dbReference type="STRING" id="9606.ENSP00000356545"/>
<dbReference type="BindingDB" id="Q15878"/>
<dbReference type="ChEMBL" id="CHEMBL1687682"/>
<dbReference type="DrugBank" id="DB13746">
    <property type="generic name" value="Bioallethrin"/>
</dbReference>
<dbReference type="DrugBank" id="DB11148">
    <property type="generic name" value="Butamben"/>
</dbReference>
<dbReference type="DrugBank" id="DB11093">
    <property type="generic name" value="Calcium citrate"/>
</dbReference>
<dbReference type="DrugBank" id="DB11348">
    <property type="generic name" value="Calcium Phosphate"/>
</dbReference>
<dbReference type="DrugBank" id="DB14481">
    <property type="generic name" value="Calcium phosphate dihydrate"/>
</dbReference>
<dbReference type="DrugBank" id="DB09235">
    <property type="generic name" value="Efonidipine"/>
</dbReference>
<dbReference type="DrugBank" id="DB00228">
    <property type="generic name" value="Enflurane"/>
</dbReference>
<dbReference type="DrugBank" id="DB00153">
    <property type="generic name" value="Ergocalciferol"/>
</dbReference>
<dbReference type="DrugBank" id="DB00555">
    <property type="generic name" value="Lamotrigine"/>
</dbReference>
<dbReference type="DrugBank" id="DB00622">
    <property type="generic name" value="Nicardipine"/>
</dbReference>
<dbReference type="DrugBank" id="DB00273">
    <property type="generic name" value="Topiramate"/>
</dbReference>
<dbReference type="DrugBank" id="DB00661">
    <property type="generic name" value="Verapamil"/>
</dbReference>
<dbReference type="GuidetoPHARMACOLOGY" id="534"/>
<dbReference type="GlyCosmos" id="Q15878">
    <property type="glycosylation" value="3 sites, No reported glycans"/>
</dbReference>
<dbReference type="GlyGen" id="Q15878">
    <property type="glycosylation" value="5 sites, 1 N-linked glycan (1 site), 1 O-linked glycan (1 site)"/>
</dbReference>
<dbReference type="iPTMnet" id="Q15878"/>
<dbReference type="PhosphoSitePlus" id="Q15878"/>
<dbReference type="SwissPalm" id="Q15878"/>
<dbReference type="BioMuta" id="CACNA1E"/>
<dbReference type="DMDM" id="209572758"/>
<dbReference type="jPOST" id="Q15878"/>
<dbReference type="MassIVE" id="Q15878"/>
<dbReference type="PaxDb" id="9606-ENSP00000356545"/>
<dbReference type="PeptideAtlas" id="Q15878"/>
<dbReference type="ProteomicsDB" id="60800">
    <molecule id="Q15878-1"/>
</dbReference>
<dbReference type="ProteomicsDB" id="60801">
    <molecule id="Q15878-2"/>
</dbReference>
<dbReference type="ProteomicsDB" id="60802">
    <molecule id="Q15878-3"/>
</dbReference>
<dbReference type="Antibodypedia" id="34433">
    <property type="antibodies" value="131 antibodies from 20 providers"/>
</dbReference>
<dbReference type="DNASU" id="777"/>
<dbReference type="Ensembl" id="ENST00000367570.6">
    <molecule id="Q15878-3"/>
    <property type="protein sequence ID" value="ENSP00000356542.1"/>
    <property type="gene ID" value="ENSG00000198216.14"/>
</dbReference>
<dbReference type="Ensembl" id="ENST00000367573.7">
    <molecule id="Q15878-1"/>
    <property type="protein sequence ID" value="ENSP00000356545.2"/>
    <property type="gene ID" value="ENSG00000198216.14"/>
</dbReference>
<dbReference type="Ensembl" id="ENST00000621791.4">
    <molecule id="Q15878-2"/>
    <property type="protein sequence ID" value="ENSP00000481619.1"/>
    <property type="gene ID" value="ENSG00000198216.14"/>
</dbReference>
<dbReference type="GeneID" id="777"/>
<dbReference type="KEGG" id="hsa:777"/>
<dbReference type="MANE-Select" id="ENST00000367573.7">
    <property type="protein sequence ID" value="ENSP00000356545.2"/>
    <property type="RefSeq nucleotide sequence ID" value="NM_001205293.3"/>
    <property type="RefSeq protein sequence ID" value="NP_001192222.1"/>
</dbReference>
<dbReference type="UCSC" id="uc001gow.5">
    <molecule id="Q15878-1"/>
    <property type="organism name" value="human"/>
</dbReference>
<dbReference type="AGR" id="HGNC:1392"/>
<dbReference type="CTD" id="777"/>
<dbReference type="DisGeNET" id="777"/>
<dbReference type="GeneCards" id="CACNA1E"/>
<dbReference type="HGNC" id="HGNC:1392">
    <property type="gene designation" value="CACNA1E"/>
</dbReference>
<dbReference type="HPA" id="ENSG00000198216">
    <property type="expression patterns" value="Tissue enriched (brain)"/>
</dbReference>
<dbReference type="MalaCards" id="CACNA1E"/>
<dbReference type="MIM" id="601013">
    <property type="type" value="gene"/>
</dbReference>
<dbReference type="MIM" id="618285">
    <property type="type" value="phenotype"/>
</dbReference>
<dbReference type="neXtProt" id="NX_Q15878"/>
<dbReference type="OpenTargets" id="ENSG00000198216"/>
<dbReference type="PharmGKB" id="PA26009"/>
<dbReference type="VEuPathDB" id="HostDB:ENSG00000198216"/>
<dbReference type="eggNOG" id="KOG2301">
    <property type="taxonomic scope" value="Eukaryota"/>
</dbReference>
<dbReference type="GeneTree" id="ENSGT00940000155601"/>
<dbReference type="HOGENOM" id="CLU_000540_1_0_1"/>
<dbReference type="InParanoid" id="Q15878"/>
<dbReference type="OMA" id="IRIVRIM"/>
<dbReference type="OrthoDB" id="431720at2759"/>
<dbReference type="PAN-GO" id="Q15878">
    <property type="GO annotations" value="5 GO annotations based on evolutionary models"/>
</dbReference>
<dbReference type="PhylomeDB" id="Q15878"/>
<dbReference type="TreeFam" id="TF312805"/>
<dbReference type="PathwayCommons" id="Q15878"/>
<dbReference type="Reactome" id="R-HSA-112308">
    <property type="pathway name" value="Presynaptic depolarization and calcium channel opening"/>
</dbReference>
<dbReference type="Reactome" id="R-HSA-422356">
    <property type="pathway name" value="Regulation of insulin secretion"/>
</dbReference>
<dbReference type="SignaLink" id="Q15878"/>
<dbReference type="SIGNOR" id="Q15878"/>
<dbReference type="BioGRID-ORCS" id="777">
    <property type="hits" value="11 hits in 1138 CRISPR screens"/>
</dbReference>
<dbReference type="ChiTaRS" id="CACNA1E">
    <property type="organism name" value="human"/>
</dbReference>
<dbReference type="GeneWiki" id="R-type_calcium_channel"/>
<dbReference type="GenomeRNAi" id="777"/>
<dbReference type="Pharos" id="Q15878">
    <property type="development level" value="Tchem"/>
</dbReference>
<dbReference type="PRO" id="PR:Q15878"/>
<dbReference type="Proteomes" id="UP000005640">
    <property type="component" value="Chromosome 1"/>
</dbReference>
<dbReference type="RNAct" id="Q15878">
    <property type="molecule type" value="protein"/>
</dbReference>
<dbReference type="Bgee" id="ENSG00000198216">
    <property type="expression patterns" value="Expressed in middle temporal gyrus and 119 other cell types or tissues"/>
</dbReference>
<dbReference type="ExpressionAtlas" id="Q15878">
    <property type="expression patterns" value="baseline and differential"/>
</dbReference>
<dbReference type="GO" id="GO:0043025">
    <property type="term" value="C:neuronal cell body"/>
    <property type="evidence" value="ECO:0000318"/>
    <property type="project" value="GO_Central"/>
</dbReference>
<dbReference type="GO" id="GO:0005886">
    <property type="term" value="C:plasma membrane"/>
    <property type="evidence" value="ECO:0000304"/>
    <property type="project" value="Reactome"/>
</dbReference>
<dbReference type="GO" id="GO:0045202">
    <property type="term" value="C:synapse"/>
    <property type="evidence" value="ECO:0007669"/>
    <property type="project" value="GOC"/>
</dbReference>
<dbReference type="GO" id="GO:0005891">
    <property type="term" value="C:voltage-gated calcium channel complex"/>
    <property type="evidence" value="ECO:0000318"/>
    <property type="project" value="GO_Central"/>
</dbReference>
<dbReference type="GO" id="GO:0005509">
    <property type="term" value="F:calcium ion binding"/>
    <property type="evidence" value="ECO:0007669"/>
    <property type="project" value="InterPro"/>
</dbReference>
<dbReference type="GO" id="GO:0005245">
    <property type="term" value="F:voltage-gated calcium channel activity"/>
    <property type="evidence" value="ECO:0000314"/>
    <property type="project" value="UniProtKB"/>
</dbReference>
<dbReference type="GO" id="GO:0022843">
    <property type="term" value="F:voltage-gated monoatomic cation channel activity"/>
    <property type="evidence" value="ECO:0000314"/>
    <property type="project" value="UniProtKB"/>
</dbReference>
<dbReference type="GO" id="GO:0098703">
    <property type="term" value="P:calcium ion import across plasma membrane"/>
    <property type="evidence" value="ECO:0000318"/>
    <property type="project" value="GO_Central"/>
</dbReference>
<dbReference type="GO" id="GO:0007268">
    <property type="term" value="P:chemical synaptic transmission"/>
    <property type="evidence" value="ECO:0000304"/>
    <property type="project" value="ProtInc"/>
</dbReference>
<dbReference type="FunFam" id="1.20.120.350:FF:000001">
    <property type="entry name" value="Voltage-dependent L-type calcium channel subunit alpha"/>
    <property type="match status" value="1"/>
</dbReference>
<dbReference type="FunFam" id="1.10.238.10:FF:000063">
    <property type="entry name" value="Voltage-dependent N-type calcium channel subunit alpha"/>
    <property type="match status" value="1"/>
</dbReference>
<dbReference type="FunFam" id="1.20.120.350:FF:000011">
    <property type="entry name" value="Voltage-dependent N-type calcium channel subunit alpha"/>
    <property type="match status" value="1"/>
</dbReference>
<dbReference type="FunFam" id="1.20.120.350:FF:000013">
    <property type="entry name" value="Voltage-dependent N-type calcium channel subunit alpha"/>
    <property type="match status" value="1"/>
</dbReference>
<dbReference type="FunFam" id="1.20.120.350:FF:000015">
    <property type="entry name" value="Voltage-dependent N-type calcium channel subunit alpha"/>
    <property type="match status" value="1"/>
</dbReference>
<dbReference type="FunFam" id="1.10.287.70:FF:000023">
    <property type="entry name" value="Voltage-dependent R-type calcium channel subunit alpha"/>
    <property type="match status" value="1"/>
</dbReference>
<dbReference type="FunFam" id="1.10.287.70:FF:000025">
    <property type="entry name" value="Voltage-dependent R-type calcium channel subunit alpha"/>
    <property type="match status" value="1"/>
</dbReference>
<dbReference type="Gene3D" id="1.10.287.70">
    <property type="match status" value="4"/>
</dbReference>
<dbReference type="Gene3D" id="6.10.250.2180">
    <property type="match status" value="1"/>
</dbReference>
<dbReference type="Gene3D" id="6.10.250.2500">
    <property type="match status" value="1"/>
</dbReference>
<dbReference type="Gene3D" id="1.20.120.350">
    <property type="entry name" value="Voltage-gated potassium channels. Chain C"/>
    <property type="match status" value="4"/>
</dbReference>
<dbReference type="InterPro" id="IPR002048">
    <property type="entry name" value="EF_hand_dom"/>
</dbReference>
<dbReference type="InterPro" id="IPR031649">
    <property type="entry name" value="GPHH_dom"/>
</dbReference>
<dbReference type="InterPro" id="IPR005821">
    <property type="entry name" value="Ion_trans_dom"/>
</dbReference>
<dbReference type="InterPro" id="IPR014873">
    <property type="entry name" value="VDCC_a1su_IQ"/>
</dbReference>
<dbReference type="InterPro" id="IPR050599">
    <property type="entry name" value="VDCC_alpha-1_subunit"/>
</dbReference>
<dbReference type="InterPro" id="IPR005449">
    <property type="entry name" value="VDCC_R_a1su"/>
</dbReference>
<dbReference type="InterPro" id="IPR002077">
    <property type="entry name" value="VDCCAlpha1"/>
</dbReference>
<dbReference type="InterPro" id="IPR027359">
    <property type="entry name" value="Volt_channel_dom_sf"/>
</dbReference>
<dbReference type="PANTHER" id="PTHR45628">
    <property type="entry name" value="VOLTAGE-DEPENDENT CALCIUM CHANNEL TYPE A SUBUNIT ALPHA-1"/>
    <property type="match status" value="1"/>
</dbReference>
<dbReference type="PANTHER" id="PTHR45628:SF5">
    <property type="entry name" value="VOLTAGE-DEPENDENT R-TYPE CALCIUM CHANNEL SUBUNIT ALPHA-1E"/>
    <property type="match status" value="1"/>
</dbReference>
<dbReference type="Pfam" id="PF08763">
    <property type="entry name" value="Ca_chan_IQ"/>
    <property type="match status" value="1"/>
</dbReference>
<dbReference type="Pfam" id="PF16905">
    <property type="entry name" value="GPHH"/>
    <property type="match status" value="1"/>
</dbReference>
<dbReference type="Pfam" id="PF00520">
    <property type="entry name" value="Ion_trans"/>
    <property type="match status" value="4"/>
</dbReference>
<dbReference type="PRINTS" id="PR00167">
    <property type="entry name" value="CACHANNEL"/>
</dbReference>
<dbReference type="PRINTS" id="PR01633">
    <property type="entry name" value="RVDCCALPHA1"/>
</dbReference>
<dbReference type="SMART" id="SM01062">
    <property type="entry name" value="Ca_chan_IQ"/>
    <property type="match status" value="1"/>
</dbReference>
<dbReference type="SUPFAM" id="SSF81324">
    <property type="entry name" value="Voltage-gated potassium channels"/>
    <property type="match status" value="4"/>
</dbReference>
<dbReference type="PROSITE" id="PS50222">
    <property type="entry name" value="EF_HAND_2"/>
    <property type="match status" value="1"/>
</dbReference>
<reference key="1">
    <citation type="journal article" date="1994" name="Recept. Channels">
        <title>Molecular analysis and functional expression of the human type E neuronal Ca2+ channel alpha 1 subunit.</title>
        <authorList>
            <person name="Schneider T."/>
            <person name="Wei X."/>
            <person name="Olcese R."/>
            <person name="Costantin J.L."/>
            <person name="Neely A."/>
            <person name="Palade P."/>
            <person name="Perez-Reyes E."/>
            <person name="Qin N."/>
            <person name="Zhou J."/>
            <person name="Crawford G.D."/>
            <person name="Smith R.G."/>
            <person name="Appel S.H."/>
            <person name="Stefani E."/>
            <person name="Birnbaumer M."/>
        </authorList>
    </citation>
    <scope>NUCLEOTIDE SEQUENCE [MRNA] (ISOFORM 1)</scope>
    <scope>VARIANT THR-1955</scope>
    <scope>FUNCTION</scope>
    <scope>TRANSPORTER ACTIVITY</scope>
    <source>
        <tissue>Brain</tissue>
    </source>
</reference>
<reference key="2">
    <citation type="journal article" date="1994" name="J. Biol. Chem.">
        <title>Structure and functional characterization of neuronal alpha 1E calcium channel subtypes.</title>
        <authorList>
            <person name="Williams M.E."/>
            <person name="Marubio L.M."/>
            <person name="Deal C.R."/>
            <person name="Hans M."/>
            <person name="Brust P.F."/>
            <person name="Philipson L.H."/>
            <person name="Miller R.J."/>
            <person name="Johnson E.C."/>
            <person name="Harpold M.M."/>
            <person name="Ellis S.B."/>
        </authorList>
    </citation>
    <scope>NUCLEOTIDE SEQUENCE [MRNA] (ISOFORMS 2 AND 3)</scope>
    <scope>FUNCTION (ISOFORM 3)</scope>
    <scope>TRANSPORTER ACTIVITY (ISOFORM 3)</scope>
    <source>
        <tissue>Hippocampus</tissue>
    </source>
</reference>
<reference key="3">
    <citation type="journal article" date="2006" name="Nature">
        <title>The DNA sequence and biological annotation of human chromosome 1.</title>
        <authorList>
            <person name="Gregory S.G."/>
            <person name="Barlow K.F."/>
            <person name="McLay K.E."/>
            <person name="Kaul R."/>
            <person name="Swarbreck D."/>
            <person name="Dunham A."/>
            <person name="Scott C.E."/>
            <person name="Howe K.L."/>
            <person name="Woodfine K."/>
            <person name="Spencer C.C.A."/>
            <person name="Jones M.C."/>
            <person name="Gillson C."/>
            <person name="Searle S."/>
            <person name="Zhou Y."/>
            <person name="Kokocinski F."/>
            <person name="McDonald L."/>
            <person name="Evans R."/>
            <person name="Phillips K."/>
            <person name="Atkinson A."/>
            <person name="Cooper R."/>
            <person name="Jones C."/>
            <person name="Hall R.E."/>
            <person name="Andrews T.D."/>
            <person name="Lloyd C."/>
            <person name="Ainscough R."/>
            <person name="Almeida J.P."/>
            <person name="Ambrose K.D."/>
            <person name="Anderson F."/>
            <person name="Andrew R.W."/>
            <person name="Ashwell R.I.S."/>
            <person name="Aubin K."/>
            <person name="Babbage A.K."/>
            <person name="Bagguley C.L."/>
            <person name="Bailey J."/>
            <person name="Beasley H."/>
            <person name="Bethel G."/>
            <person name="Bird C.P."/>
            <person name="Bray-Allen S."/>
            <person name="Brown J.Y."/>
            <person name="Brown A.J."/>
            <person name="Buckley D."/>
            <person name="Burton J."/>
            <person name="Bye J."/>
            <person name="Carder C."/>
            <person name="Chapman J.C."/>
            <person name="Clark S.Y."/>
            <person name="Clarke G."/>
            <person name="Clee C."/>
            <person name="Cobley V."/>
            <person name="Collier R.E."/>
            <person name="Corby N."/>
            <person name="Coville G.J."/>
            <person name="Davies J."/>
            <person name="Deadman R."/>
            <person name="Dunn M."/>
            <person name="Earthrowl M."/>
            <person name="Ellington A.G."/>
            <person name="Errington H."/>
            <person name="Frankish A."/>
            <person name="Frankland J."/>
            <person name="French L."/>
            <person name="Garner P."/>
            <person name="Garnett J."/>
            <person name="Gay L."/>
            <person name="Ghori M.R.J."/>
            <person name="Gibson R."/>
            <person name="Gilby L.M."/>
            <person name="Gillett W."/>
            <person name="Glithero R.J."/>
            <person name="Grafham D.V."/>
            <person name="Griffiths C."/>
            <person name="Griffiths-Jones S."/>
            <person name="Grocock R."/>
            <person name="Hammond S."/>
            <person name="Harrison E.S.I."/>
            <person name="Hart E."/>
            <person name="Haugen E."/>
            <person name="Heath P.D."/>
            <person name="Holmes S."/>
            <person name="Holt K."/>
            <person name="Howden P.J."/>
            <person name="Hunt A.R."/>
            <person name="Hunt S.E."/>
            <person name="Hunter G."/>
            <person name="Isherwood J."/>
            <person name="James R."/>
            <person name="Johnson C."/>
            <person name="Johnson D."/>
            <person name="Joy A."/>
            <person name="Kay M."/>
            <person name="Kershaw J.K."/>
            <person name="Kibukawa M."/>
            <person name="Kimberley A.M."/>
            <person name="King A."/>
            <person name="Knights A.J."/>
            <person name="Lad H."/>
            <person name="Laird G."/>
            <person name="Lawlor S."/>
            <person name="Leongamornlert D.A."/>
            <person name="Lloyd D.M."/>
            <person name="Loveland J."/>
            <person name="Lovell J."/>
            <person name="Lush M.J."/>
            <person name="Lyne R."/>
            <person name="Martin S."/>
            <person name="Mashreghi-Mohammadi M."/>
            <person name="Matthews L."/>
            <person name="Matthews N.S.W."/>
            <person name="McLaren S."/>
            <person name="Milne S."/>
            <person name="Mistry S."/>
            <person name="Moore M.J.F."/>
            <person name="Nickerson T."/>
            <person name="O'Dell C.N."/>
            <person name="Oliver K."/>
            <person name="Palmeiri A."/>
            <person name="Palmer S.A."/>
            <person name="Parker A."/>
            <person name="Patel D."/>
            <person name="Pearce A.V."/>
            <person name="Peck A.I."/>
            <person name="Pelan S."/>
            <person name="Phelps K."/>
            <person name="Phillimore B.J."/>
            <person name="Plumb R."/>
            <person name="Rajan J."/>
            <person name="Raymond C."/>
            <person name="Rouse G."/>
            <person name="Saenphimmachak C."/>
            <person name="Sehra H.K."/>
            <person name="Sheridan E."/>
            <person name="Shownkeen R."/>
            <person name="Sims S."/>
            <person name="Skuce C.D."/>
            <person name="Smith M."/>
            <person name="Steward C."/>
            <person name="Subramanian S."/>
            <person name="Sycamore N."/>
            <person name="Tracey A."/>
            <person name="Tromans A."/>
            <person name="Van Helmond Z."/>
            <person name="Wall M."/>
            <person name="Wallis J.M."/>
            <person name="White S."/>
            <person name="Whitehead S.L."/>
            <person name="Wilkinson J.E."/>
            <person name="Willey D.L."/>
            <person name="Williams H."/>
            <person name="Wilming L."/>
            <person name="Wray P.W."/>
            <person name="Wu Z."/>
            <person name="Coulson A."/>
            <person name="Vaudin M."/>
            <person name="Sulston J.E."/>
            <person name="Durbin R.M."/>
            <person name="Hubbard T."/>
            <person name="Wooster R."/>
            <person name="Dunham I."/>
            <person name="Carter N.P."/>
            <person name="McVean G."/>
            <person name="Ross M.T."/>
            <person name="Harrow J."/>
            <person name="Olson M.V."/>
            <person name="Beck S."/>
            <person name="Rogers J."/>
            <person name="Bentley D.R."/>
        </authorList>
    </citation>
    <scope>NUCLEOTIDE SEQUENCE [LARGE SCALE GENOMIC DNA]</scope>
</reference>
<reference key="4">
    <citation type="journal article" date="2004" name="Nat. Genet.">
        <title>Mutations in EFHC1 cause juvenile myoclonic epilepsy.</title>
        <authorList>
            <person name="Suzuki T."/>
            <person name="Delgado-Escueta A.V."/>
            <person name="Aguan K."/>
            <person name="Alonso M.E."/>
            <person name="Shi J."/>
            <person name="Hara Y."/>
            <person name="Nishida M."/>
            <person name="Numata T."/>
            <person name="Medina M.T."/>
            <person name="Takeuchi T."/>
            <person name="Morita R."/>
            <person name="Bai D."/>
            <person name="Ganesh S."/>
            <person name="Sugimoto Y."/>
            <person name="Inazawa J."/>
            <person name="Bailey J.N."/>
            <person name="Ochoa A."/>
            <person name="Jara-Prado A."/>
            <person name="Rasmussen A."/>
            <person name="Ramos-Peek J."/>
            <person name="Cordova S."/>
            <person name="Rubio-Donnadieu F."/>
            <person name="Inoue Y."/>
            <person name="Osawa M."/>
            <person name="Kaneko S."/>
            <person name="Oguni H."/>
            <person name="Mori Y."/>
            <person name="Yamakawa K."/>
        </authorList>
    </citation>
    <scope>INTERACTION WITH EFHC1</scope>
</reference>
<reference key="5">
    <citation type="journal article" date="2018" name="Am. J. Hum. Genet.">
        <title>De novo pathogenic variants in CACNA1E cause developmental and epileptic encephalopathy with contractures, macrocephaly, and dyskinesias.</title>
        <authorList>
            <consortium name="Task Force for Neonatal Genomics"/>
            <consortium name="Deciphering Developmental Disorders Study"/>
            <person name="Helbig K.L."/>
            <person name="Lauerer R.J."/>
            <person name="Bahr J.C."/>
            <person name="Souza I.A."/>
            <person name="Myers C.T."/>
            <person name="Uysal B."/>
            <person name="Schwarz N."/>
            <person name="Gandini M.A."/>
            <person name="Huang S."/>
            <person name="Keren B."/>
            <person name="Mignot C."/>
            <person name="Afenjar A."/>
            <person name="Billette de Villemeur T."/>
            <person name="Heron D."/>
            <person name="Nava C."/>
            <person name="Valence S."/>
            <person name="Buratti J."/>
            <person name="Fagerberg C.R."/>
            <person name="Soerensen K.P."/>
            <person name="Kibaek M."/>
            <person name="Kamsteeg E.J."/>
            <person name="Koolen D.A."/>
            <person name="Gunning B."/>
            <person name="Schelhaas H.J."/>
            <person name="Kruer M.C."/>
            <person name="Fox J."/>
            <person name="Bakhtiari S."/>
            <person name="Jarrar R."/>
            <person name="Padilla-Lopez S."/>
            <person name="Lindstrom K."/>
            <person name="Jin S.C."/>
            <person name="Zeng X."/>
            <person name="Bilguvar K."/>
            <person name="Papavasileiou A."/>
            <person name="Xing Q."/>
            <person name="Zhu C."/>
            <person name="Boysen K."/>
            <person name="Vairo F."/>
            <person name="Lanpher B.C."/>
            <person name="Klee E.W."/>
            <person name="Tillema J.M."/>
            <person name="Payne E.T."/>
            <person name="Cousin M.A."/>
            <person name="Kruisselbrink T.M."/>
            <person name="Wick M.J."/>
            <person name="Baker J."/>
            <person name="Haan E."/>
            <person name="Smith N."/>
            <person name="Sadeghpour A."/>
            <person name="Davis E.E."/>
            <person name="Katsanis N."/>
            <person name="Corbett M.A."/>
            <person name="MacLennan A.H."/>
            <person name="Gecz J."/>
            <person name="Biskup S."/>
            <person name="Goldmann E."/>
            <person name="Rodan L.H."/>
            <person name="Kichula E."/>
            <person name="Segal E."/>
            <person name="Jackson K.E."/>
            <person name="Asamoah A."/>
            <person name="Dimmock D."/>
            <person name="McCarrier J."/>
            <person name="Botto L.D."/>
            <person name="Filloux F."/>
            <person name="Tvrdik T."/>
            <person name="Cascino G.D."/>
            <person name="Klingerman S."/>
            <person name="Neumann C."/>
            <person name="Wang R."/>
            <person name="Jacobsen J.C."/>
            <person name="Nolan M.A."/>
            <person name="Snell R.G."/>
            <person name="Lehnert K."/>
            <person name="Sadleir L.G."/>
            <person name="Anderlid B.M."/>
            <person name="Kvarnung M."/>
            <person name="Guerrini R."/>
            <person name="Friez M.J."/>
            <person name="Lyons M.J."/>
            <person name="Leonhard J."/>
            <person name="Kringlen G."/>
            <person name="Casas K."/>
            <person name="El Achkar C.M."/>
            <person name="Smith L.A."/>
            <person name="Rotenberg A."/>
            <person name="Poduri A."/>
            <person name="Sanchis-Juan A."/>
            <person name="Carss K.J."/>
            <person name="Rankin J."/>
            <person name="Zeman A."/>
            <person name="Raymond F.L."/>
            <person name="Blyth M."/>
            <person name="Kerr B."/>
            <person name="Ruiz K."/>
            <person name="Urquhart J."/>
            <person name="Hughes I."/>
            <person name="Banka S."/>
            <person name="Hedrich U.B.S."/>
            <person name="Scheffer I.E."/>
            <person name="Helbig I."/>
            <person name="Zamponi G.W."/>
            <person name="Lerche H."/>
            <person name="Mefford H.C."/>
        </authorList>
    </citation>
    <scope>FUNCTION</scope>
    <scope>INVOLVEMENT IN DEE69</scope>
    <scope>VARIANTS DEE69 PRO-228; ARG-348; ARG-352; LEU-603; ASP-690; SER-698; THR-700; VAL-701; PRO-702; THR-702; 829-ARG--CYS-2313 DEL; 1389-ARG--CYS-2313 DEL; PHE-1422; ASN-1425; ARG-1430 AND GLY-1720</scope>
    <scope>CHARACTERIZATION OF VARIANTS DEE69 LEU-603; SER-698; VAL-701 AND THR-702</scope>
    <scope>TRANSPORTER ACTIVITY</scope>
</reference>
<reference key="6">
    <citation type="journal article" date="2008" name="Structure">
        <title>Crystal structure of the CaV2 IQ domain in complex with Ca2+/calmodulin: high-resolution mechanistic implications for channel regulation by Ca2+.</title>
        <authorList>
            <person name="Mori M.X."/>
            <person name="Vander Kooi C.W."/>
            <person name="Leahy D.J."/>
            <person name="Yue D.T."/>
        </authorList>
    </citation>
    <scope>X-RAY CRYSTALLOGRAPHY (2.3 ANGSTROMS) OF 1867-1885</scope>
</reference>
<sequence>MARFGEAVVARPGSGDGDSDQSRNRQGTPVPASGQAAAYKQTKAQRARTMALYNPIPVRQNCFTVNRSLFIFGEDNIVRKYAKKLIDWPPFEYMILATIIANCIVLALEQHLPEDDKTPMSRRLEKTEPYFIGIFCFEAGIKIVALGFIFHKGSYLRNGWNVMDFIVVLSGILATAGTHFNTHVDLRTLRAVRVLRPLKLVSGIPSLQIVLKSIMKAMVPLLQIGLLLFFAILMFAIIGLEFYSGKLHRACFMNNSGILEGFDPPHPCGVQGCPAGYECKDWIGPNDGITQFDNILFAVLTVFQCITMEGWTTVLYNTNDALGATWNWLYFIPLIIIGSFFVLNLVLGVLSGEFAKERERVENRRAFMKLRRQQQIERELNGYRAWIDKAEEVMLAEENKNAGTSALEVLRRATIKRSRTEAMTRDSSDEHCVDISSVGTPLARASIKSAKVDGVSYFRHKERLLRISIRHMVKSQVFYWIVLSLVALNTACVAIVHHNQPQWLTHLLYYAEFLFLGLFLLEMSLKMYGMGPRLYFHSSFNCFDFGVTVGSIFEVVWAIFRPGTSFGISVLRALRLLRIFKITKYWASLRNLVVSLMSSMKSIISLLFLLFLFIVVFALLGMQLFGGRFNFNDGTPSANFDTFPAAIMTVFQILTGEDWNEVMYNGIRSQGGVSSGMWSAIYFIVLTLFGNYTLLNVFLAIAVDNLANAQELTKDEQEEEEAFNQKHALQKAKEVSPMSAPNMPSIERDRRRRHHMSMWEPRSSHLRERRRRHHMSVWEQRTSQLRKHMQMSSQEALNREEAPTMNPLNPLNPLSSLNPLNAHPSLYRRPRAIEGLALGLALEKFEEERISRGGSLKGDGGDRSSALDNQRTPLSLGQREPPWLARPCHGNCDPTQQEAGGGEAVVTFEDRARHRQSQRRSRHRRVRTEGKESSSASRSRSASQERSLDEAMPTEGEKDHELRGNHGAKEPTIQEERAQDLRRTNSLMVSRGSGLAGGLDEADTPLVLPHPELEVGKHVVLTEQEPEGSSEQALLGNVQLDMGRVISQSEPDLSCITANTDKATTESTSVTVAIPDVDPLVDSTVVHISNKTDGEASPLKEAEIREDEEEVEKKKQKKEKRETGKAMVPHSSMFIFSTTNPIRRACHYIVNLRYFEMCILLVIAASSIALAAEDPVLTNSERNKVLRYFDYVFTGVFTFEMVIKMIDQGLILQDGSYFRDLWNILDFVVVVGALVAFALANALGTNKGRDIKTIKSLRVLRVLRPLKTIKRLPKLKAVFDCVVTSLKNVFNILIVYKLFMFIFAVIAVQLFKGKFFYCTDSSKDTEKECIGNYVDHEKNKMEVKGREWKRHEFHYDNIIWALLTLFTVSTGEGWPQVLQHSVDVTEEDRGPSRSNRMEMSIFYVVYFVVFPFFFVNIFVALIIITFQEQGDKMMEECSLEKNERACIDFAISAKPLTRYMPQNRHTFQYRVWHFVVSPSFEYTIMAMIALNTVVLMMKYYSAPCTYELALKYLNIAFTMVFSLECVLKVIAFGFLNYFRDTWNIFDFITVIGSITEIILTDSKLVNTSGFNMSFLKLFRAARLIKLLRQGYTIRILLWTFVQSFKALPYVCLLIAMLFFIYAIIGMQVFGNIKLDEESHINRHNNFRSFFGSLMLLFRSATGEAWQEIMLSCLGEKGCEPDTTAPSGQNENERCGTDLAYVYFVSFIFFCSFLMLNLFVAVIMDNFEYLTRDSSILGPHHLDEFVRVWAEYDRAACGRIHYTEMYEMLTLMSPPLGLGKRCPSKVAYKRLVLMNMPVAEDMTVHFTSTLMALIRTALDIKIAKGGADRQQLDSELQKETLAIWPHLSQKMLDLLVPMPKASDLTVGKIYAAMMIMDYYKQSKVKKQRQQLEEQKNAPMFQRMEPSSLPQEIIANAKALPYLQQDPVSGLSGRSGYPSMSPLSPQDIFQLACMDPADDGQFQERQSLEPEVSELKSVQPSNHGIYLPSDTQEHAGSGRASSMPRLTVDPQVVTDPSSMRRSFSTIRDKRSNSSWLEEFSMERSSENTYKSRRRSYHSSLRLSAHRLNSDSGHKSDTHRSGGRERGRSKERKHLLSPDVSRCNSEERGTQADWESPERRQSRSPSEGRSQTPNRQGTGSLSESSIPSVSDTSTPRRSRRQLPPVPPKPRPLLSYSSLIRHAGSISPPADGSEEGSPLTSQALESNNACLTESSNSPHPQQSQHASPQRYISEPYLALHEDSHASDCGEEETLTFEAAVATSLGRSNTIGSAPPLRHSWQMPNGHYRRRRRGGPGPGMMCGAVNNLLSDTEEDDKC</sequence>
<name>CAC1E_HUMAN</name>
<comment type="function">
    <text evidence="8 9">Voltage-sensitive calcium channels (VSCC) mediate the entry of calcium ions into excitable cells (PubMed:30343943). They are also involved in a variety of calcium-dependent processes, including muscle contraction, hormone or neurotransmitter release, gene expression, cell motility, cell division and cell death. The isoform alpha-1E gives rise to R-type calcium currents. R-type calcium channels belong to the 'high-voltage activated' (HVA) group and are blocked by nickel. They are however insensitive to dihydropyridines (DHP). Calcium channels containing alpha-1E subunit could be involved in the modulation of firing patterns of neurons which is important for information processing.</text>
</comment>
<comment type="function">
    <molecule>Isoform 3</molecule>
    <text evidence="10">Voltage-sensitive calcium channels (VSCC) mediate the entry of calcium ions into excitable cells. They are also involved in a variety of calcium-dependent processes, including muscle contraction, hormone or neurotransmitter release, gene expression, cell motility, cell division and cell death. The isoform alpha-1E gives rise to R-type calcium currents.</text>
</comment>
<comment type="catalytic activity">
    <reaction evidence="8 9">
        <text>Ca(2+)(in) = Ca(2+)(out)</text>
        <dbReference type="Rhea" id="RHEA:29671"/>
        <dbReference type="ChEBI" id="CHEBI:29108"/>
    </reaction>
</comment>
<comment type="catalytic activity">
    <molecule>Isoform 3</molecule>
    <reaction evidence="10">
        <text>Ca(2+)(in) = Ca(2+)(out)</text>
        <dbReference type="Rhea" id="RHEA:29671"/>
        <dbReference type="ChEBI" id="CHEBI:29108"/>
    </reaction>
</comment>
<comment type="subunit">
    <text evidence="7">Interacts with EFHC1. Voltage-dependent calcium channels are multisubunit complexes, consisting of alpha-1, alpha-2, beta and delta subunits in a 1:1:1:1 ratio. The channel activity is directed by the pore-forming and voltage-sensitive alpha-1 subunit. In many cases, this subunit is sufficient to generate voltage-sensitive calcium channel activity. The auxiliary subunits beta and alpha-2/delta linked by a disulfide bridge regulate the channel activity.</text>
</comment>
<comment type="subcellular location">
    <subcellularLocation>
        <location evidence="4">Membrane</location>
        <topology evidence="4">Multi-pass membrane protein</topology>
    </subcellularLocation>
</comment>
<comment type="alternative products">
    <event type="alternative splicing"/>
    <isoform>
        <id>Q15878-1</id>
        <name>1</name>
        <name>Alpha-1E</name>
        <sequence type="displayed"/>
    </isoform>
    <isoform>
        <id>Q15878-2</id>
        <name>2</name>
        <name>Alpha-1E-1</name>
        <sequence type="described" ref="VSP_000937 VSP_024817"/>
    </isoform>
    <isoform>
        <id>Q15878-3</id>
        <name>3</name>
        <name>Alpha-1E-3</name>
        <sequence type="described" ref="VSP_024817"/>
    </isoform>
</comment>
<comment type="tissue specificity">
    <text>Expressed in neuronal tissues and in kidney.</text>
</comment>
<comment type="domain">
    <text>Each of the four internal repeats contains five hydrophobic transmembrane segments (S1, S2, S3, S5, S6) and one positively charged transmembrane segment (S4). S4 segments probably represent the voltage-sensor and are characterized by a series of positively charged amino acids at every third position.</text>
</comment>
<comment type="disease" evidence="8">
    <disease id="DI-05449">
        <name>Developmental and epileptic encephalopathy 69</name>
        <acronym>DEE69</acronym>
        <description>A form of epileptic encephalopathy, a heterogeneous group of severe early-onset epilepsies characterized by refractory seizures, neurodevelopmental impairment, and poor prognosis. Development is normal prior to seizure onset, after which cognitive and motor delays become apparent. DEE69 is an autosomal dominant form characterized by refractory seizures, hypotonia, and profoundly impaired development often associated with macrocephaly, hyperkinetic movements, and contractures. The disorder can sometimes result in early death. Some patients may have a favorable seizure response to topiramate medication.</description>
        <dbReference type="MIM" id="618285"/>
    </disease>
    <text>The disease is caused by variants affecting the gene represented in this entry.</text>
</comment>
<comment type="similarity">
    <text evidence="12">Belongs to the calcium channel alpha-1 subunit (TC 1.A.1.11) family. CACNA1E subfamily.</text>
</comment>
<organism>
    <name type="scientific">Homo sapiens</name>
    <name type="common">Human</name>
    <dbReference type="NCBI Taxonomy" id="9606"/>
    <lineage>
        <taxon>Eukaryota</taxon>
        <taxon>Metazoa</taxon>
        <taxon>Chordata</taxon>
        <taxon>Craniata</taxon>
        <taxon>Vertebrata</taxon>
        <taxon>Euteleostomi</taxon>
        <taxon>Mammalia</taxon>
        <taxon>Eutheria</taxon>
        <taxon>Euarchontoglires</taxon>
        <taxon>Primates</taxon>
        <taxon>Haplorrhini</taxon>
        <taxon>Catarrhini</taxon>
        <taxon>Hominidae</taxon>
        <taxon>Homo</taxon>
    </lineage>
</organism>
<accession>Q15878</accession>
<accession>B1AM12</accession>
<accession>B1AM13</accession>
<accession>B1AM14</accession>
<accession>Q14580</accession>
<accession>Q14581</accession>
<protein>
    <recommendedName>
        <fullName>Voltage-dependent R-type calcium channel subunit alpha-1E</fullName>
    </recommendedName>
    <alternativeName>
        <fullName>Brain calcium channel II</fullName>
        <shortName>BII</shortName>
    </alternativeName>
    <alternativeName>
        <fullName>Calcium channel, L type, alpha-1 polypeptide, isoform 6</fullName>
    </alternativeName>
    <alternativeName>
        <fullName>Voltage-gated calcium channel subunit alpha Cav2.3</fullName>
    </alternativeName>
</protein>